<evidence type="ECO:0000250" key="1"/>
<evidence type="ECO:0000255" key="2">
    <source>
        <dbReference type="PROSITE-ProRule" id="PRU00981"/>
    </source>
</evidence>
<evidence type="ECO:0000256" key="3">
    <source>
        <dbReference type="SAM" id="MobiDB-lite"/>
    </source>
</evidence>
<evidence type="ECO:0000305" key="4"/>
<organismHost>
    <name type="scientific">Felidae</name>
    <name type="common">cat family</name>
    <dbReference type="NCBI Taxonomy" id="9681"/>
</organismHost>
<dbReference type="EMBL" id="M10973">
    <property type="protein sequence ID" value="AAA43059.1"/>
    <property type="status" value="ALT_INIT"/>
    <property type="molecule type" value="Genomic_DNA"/>
</dbReference>
<dbReference type="SMR" id="P68272"/>
<dbReference type="GO" id="GO:0042025">
    <property type="term" value="C:host cell nucleus"/>
    <property type="evidence" value="ECO:0007669"/>
    <property type="project" value="UniProtKB-SubCell"/>
</dbReference>
<dbReference type="GO" id="GO:0003677">
    <property type="term" value="F:DNA binding"/>
    <property type="evidence" value="ECO:0007669"/>
    <property type="project" value="UniProtKB-KW"/>
</dbReference>
<dbReference type="GO" id="GO:0003700">
    <property type="term" value="F:DNA-binding transcription factor activity"/>
    <property type="evidence" value="ECO:0007669"/>
    <property type="project" value="InterPro"/>
</dbReference>
<dbReference type="GO" id="GO:0046983">
    <property type="term" value="F:protein dimerization activity"/>
    <property type="evidence" value="ECO:0007669"/>
    <property type="project" value="InterPro"/>
</dbReference>
<dbReference type="CDD" id="cd11458">
    <property type="entry name" value="bHLHzip_c-Myc"/>
    <property type="match status" value="1"/>
</dbReference>
<dbReference type="FunFam" id="4.10.280.10:FF:000019">
    <property type="entry name" value="Myc proto-oncogene protein"/>
    <property type="match status" value="1"/>
</dbReference>
<dbReference type="Gene3D" id="4.10.280.10">
    <property type="entry name" value="Helix-loop-helix DNA-binding domain"/>
    <property type="match status" value="1"/>
</dbReference>
<dbReference type="InterPro" id="IPR011598">
    <property type="entry name" value="bHLH_dom"/>
</dbReference>
<dbReference type="InterPro" id="IPR036638">
    <property type="entry name" value="HLH_DNA-bd_sf"/>
</dbReference>
<dbReference type="InterPro" id="IPR003327">
    <property type="entry name" value="Myc-LZ"/>
</dbReference>
<dbReference type="InterPro" id="IPR050433">
    <property type="entry name" value="Myc_transcription_factors"/>
</dbReference>
<dbReference type="InterPro" id="IPR002418">
    <property type="entry name" value="Tscrpt_reg_Myc"/>
</dbReference>
<dbReference type="InterPro" id="IPR012682">
    <property type="entry name" value="Tscrpt_reg_Myc_N"/>
</dbReference>
<dbReference type="PANTHER" id="PTHR45851">
    <property type="entry name" value="MYC PROTO-ONCOGENE"/>
    <property type="match status" value="1"/>
</dbReference>
<dbReference type="Pfam" id="PF00010">
    <property type="entry name" value="HLH"/>
    <property type="match status" value="1"/>
</dbReference>
<dbReference type="Pfam" id="PF02344">
    <property type="entry name" value="Myc-LZ"/>
    <property type="match status" value="1"/>
</dbReference>
<dbReference type="Pfam" id="PF01056">
    <property type="entry name" value="Myc_N"/>
    <property type="match status" value="1"/>
</dbReference>
<dbReference type="PIRSF" id="PIRSF001705">
    <property type="entry name" value="Myc_protein"/>
    <property type="match status" value="1"/>
</dbReference>
<dbReference type="PRINTS" id="PR00044">
    <property type="entry name" value="LEUZIPPRMYC"/>
</dbReference>
<dbReference type="SMART" id="SM00353">
    <property type="entry name" value="HLH"/>
    <property type="match status" value="1"/>
</dbReference>
<dbReference type="SUPFAM" id="SSF47459">
    <property type="entry name" value="HLH, helix-loop-helix DNA-binding domain"/>
    <property type="match status" value="1"/>
</dbReference>
<dbReference type="PROSITE" id="PS50888">
    <property type="entry name" value="BHLH"/>
    <property type="match status" value="1"/>
</dbReference>
<gene>
    <name type="primary">MYC</name>
</gene>
<protein>
    <recommendedName>
        <fullName>Viral myc transforming protein</fullName>
        <shortName>v-Myc</shortName>
    </recommendedName>
</protein>
<reference key="1">
    <citation type="journal article" date="1985" name="J. Virol.">
        <title>Nucleotide sequence of a transduced myc gene from a defective feline leukemia provirus.</title>
        <authorList>
            <person name="Braun M.J."/>
            <person name="Deininger P.L."/>
            <person name="Casey J.W."/>
        </authorList>
    </citation>
    <scope>NUCLEOTIDE SEQUENCE [GENOMIC DNA]</scope>
</reference>
<sequence>MPLNVSFANRNYDLDYDSVQPYFYCDEEENFYQQQQQSELQPPAPSEDIWKKFELLPTPPLSPSRRSGLCSPSYVAFASFSPRGDDDGGGGSFSTADQLEMVTELLGGDMVNQSFICDPDDETFIKNIIIQDCMWSGFSAAAKLVSEKLASYQAARKDSGSPSPARGPGGCPTSSLYLQDLTAAASECIDPSVVFPYPLNDSSSPKPCASPDSAAFSPSSDSLLSSAESSPRASPEPLALHEETPPTTSSDSEEEQEEEEEIDVVSVEKRQPPAKRSESGSPSAGGHSKPPHSPLVLKRCHVPTHQHNYAAPPSTRKDYPAAKRAKLDSGRVLKQISNNRKCISPRSSDTEENDKRRTHNVLERQRRNELKRSFFALRDQIPELENNEKAPKVVILKKATAYILSVQAGEQKLISEKDLLRKRREQLKHKLEQLRNSCA</sequence>
<proteinExistence type="inferred from homology"/>
<comment type="function">
    <text evidence="1">Participates in the regulation of gene transcription. Binds DNA in a non-specific manner, yet also specifically recognizes the core sequence CAC[GA]TG. Seems to activate the transcription of growth-related genes (By similarity).</text>
</comment>
<comment type="subcellular location">
    <subcellularLocation>
        <location evidence="4">Host nucleus</location>
    </subcellularLocation>
</comment>
<comment type="miscellaneous">
    <text>This protein is synthesized as a Gag-vMyc chimeric protein. The sequence shown here corresponds to the Myc homolog fragment of the chimera.</text>
</comment>
<comment type="sequence caution" evidence="4">
    <conflict type="erroneous initiation">
        <sequence resource="EMBL-CDS" id="AAA43059"/>
    </conflict>
</comment>
<name>MYC_FLV</name>
<organism>
    <name type="scientific">Feline leukemia virus</name>
    <dbReference type="NCBI Taxonomy" id="11768"/>
    <lineage>
        <taxon>Viruses</taxon>
        <taxon>Riboviria</taxon>
        <taxon>Pararnavirae</taxon>
        <taxon>Artverviricota</taxon>
        <taxon>Revtraviricetes</taxon>
        <taxon>Ortervirales</taxon>
        <taxon>Retroviridae</taxon>
        <taxon>Orthoretrovirinae</taxon>
        <taxon>Gammaretrovirus</taxon>
    </lineage>
</organism>
<accession>P68272</accession>
<accession>P06877</accession>
<accession>P06878</accession>
<accession>Q28413</accession>
<feature type="chain" id="PRO_0000127311" description="Viral myc transforming protein">
    <location>
        <begin position="1"/>
        <end position="439"/>
    </location>
</feature>
<feature type="domain" description="bHLH" evidence="2">
    <location>
        <begin position="354"/>
        <end position="406"/>
    </location>
</feature>
<feature type="region of interest" description="Disordered" evidence="3">
    <location>
        <begin position="201"/>
        <end position="296"/>
    </location>
</feature>
<feature type="region of interest" description="Leucine-zipper">
    <location>
        <begin position="413"/>
        <end position="434"/>
    </location>
</feature>
<feature type="compositionally biased region" description="Low complexity" evidence="3">
    <location>
        <begin position="207"/>
        <end position="238"/>
    </location>
</feature>
<feature type="compositionally biased region" description="Acidic residues" evidence="3">
    <location>
        <begin position="251"/>
        <end position="263"/>
    </location>
</feature>
<feature type="compositionally biased region" description="Basic and acidic residues" evidence="3">
    <location>
        <begin position="266"/>
        <end position="278"/>
    </location>
</feature>
<keyword id="KW-0010">Activator</keyword>
<keyword id="KW-0238">DNA-binding</keyword>
<keyword id="KW-1048">Host nucleus</keyword>
<keyword id="KW-0553">Oncogene</keyword>
<keyword id="KW-0804">Transcription</keyword>
<keyword id="KW-0805">Transcription regulation</keyword>